<dbReference type="EC" id="2.7.1.148" evidence="1"/>
<dbReference type="EMBL" id="CP000462">
    <property type="protein sequence ID" value="ABK37481.1"/>
    <property type="molecule type" value="Genomic_DNA"/>
</dbReference>
<dbReference type="RefSeq" id="WP_011706938.1">
    <property type="nucleotide sequence ID" value="NC_008570.1"/>
</dbReference>
<dbReference type="RefSeq" id="YP_857652.1">
    <property type="nucleotide sequence ID" value="NC_008570.1"/>
</dbReference>
<dbReference type="SMR" id="A0KN01"/>
<dbReference type="STRING" id="380703.AHA_3152"/>
<dbReference type="EnsemblBacteria" id="ABK37481">
    <property type="protein sequence ID" value="ABK37481"/>
    <property type="gene ID" value="AHA_3152"/>
</dbReference>
<dbReference type="GeneID" id="4489793"/>
<dbReference type="KEGG" id="aha:AHA_3152"/>
<dbReference type="eggNOG" id="COG1947">
    <property type="taxonomic scope" value="Bacteria"/>
</dbReference>
<dbReference type="HOGENOM" id="CLU_053057_3_0_6"/>
<dbReference type="OrthoDB" id="9809438at2"/>
<dbReference type="UniPathway" id="UPA00056">
    <property type="reaction ID" value="UER00094"/>
</dbReference>
<dbReference type="Proteomes" id="UP000000756">
    <property type="component" value="Chromosome"/>
</dbReference>
<dbReference type="GO" id="GO:0050515">
    <property type="term" value="F:4-(cytidine 5'-diphospho)-2-C-methyl-D-erythritol kinase activity"/>
    <property type="evidence" value="ECO:0007669"/>
    <property type="project" value="UniProtKB-UniRule"/>
</dbReference>
<dbReference type="GO" id="GO:0005524">
    <property type="term" value="F:ATP binding"/>
    <property type="evidence" value="ECO:0007669"/>
    <property type="project" value="UniProtKB-UniRule"/>
</dbReference>
<dbReference type="GO" id="GO:0019288">
    <property type="term" value="P:isopentenyl diphosphate biosynthetic process, methylerythritol 4-phosphate pathway"/>
    <property type="evidence" value="ECO:0007669"/>
    <property type="project" value="UniProtKB-UniRule"/>
</dbReference>
<dbReference type="GO" id="GO:0016114">
    <property type="term" value="P:terpenoid biosynthetic process"/>
    <property type="evidence" value="ECO:0007669"/>
    <property type="project" value="InterPro"/>
</dbReference>
<dbReference type="FunFam" id="3.30.230.10:FF:000022">
    <property type="entry name" value="4-diphosphocytidyl-2-C-methyl-D-erythritol kinase"/>
    <property type="match status" value="1"/>
</dbReference>
<dbReference type="Gene3D" id="3.30.230.10">
    <property type="match status" value="1"/>
</dbReference>
<dbReference type="Gene3D" id="3.30.70.890">
    <property type="entry name" value="GHMP kinase, C-terminal domain"/>
    <property type="match status" value="1"/>
</dbReference>
<dbReference type="HAMAP" id="MF_00061">
    <property type="entry name" value="IspE"/>
    <property type="match status" value="1"/>
</dbReference>
<dbReference type="InterPro" id="IPR013750">
    <property type="entry name" value="GHMP_kinase_C_dom"/>
</dbReference>
<dbReference type="InterPro" id="IPR036554">
    <property type="entry name" value="GHMP_kinase_C_sf"/>
</dbReference>
<dbReference type="InterPro" id="IPR006204">
    <property type="entry name" value="GHMP_kinase_N_dom"/>
</dbReference>
<dbReference type="InterPro" id="IPR004424">
    <property type="entry name" value="IspE"/>
</dbReference>
<dbReference type="InterPro" id="IPR020568">
    <property type="entry name" value="Ribosomal_Su5_D2-typ_SF"/>
</dbReference>
<dbReference type="InterPro" id="IPR014721">
    <property type="entry name" value="Ribsml_uS5_D2-typ_fold_subgr"/>
</dbReference>
<dbReference type="NCBIfam" id="TIGR00154">
    <property type="entry name" value="ispE"/>
    <property type="match status" value="1"/>
</dbReference>
<dbReference type="NCBIfam" id="NF011202">
    <property type="entry name" value="PRK14608.1"/>
    <property type="match status" value="1"/>
</dbReference>
<dbReference type="PANTHER" id="PTHR43527">
    <property type="entry name" value="4-DIPHOSPHOCYTIDYL-2-C-METHYL-D-ERYTHRITOL KINASE, CHLOROPLASTIC"/>
    <property type="match status" value="1"/>
</dbReference>
<dbReference type="PANTHER" id="PTHR43527:SF2">
    <property type="entry name" value="4-DIPHOSPHOCYTIDYL-2-C-METHYL-D-ERYTHRITOL KINASE, CHLOROPLASTIC"/>
    <property type="match status" value="1"/>
</dbReference>
<dbReference type="Pfam" id="PF08544">
    <property type="entry name" value="GHMP_kinases_C"/>
    <property type="match status" value="1"/>
</dbReference>
<dbReference type="Pfam" id="PF00288">
    <property type="entry name" value="GHMP_kinases_N"/>
    <property type="match status" value="1"/>
</dbReference>
<dbReference type="PIRSF" id="PIRSF010376">
    <property type="entry name" value="IspE"/>
    <property type="match status" value="1"/>
</dbReference>
<dbReference type="SUPFAM" id="SSF55060">
    <property type="entry name" value="GHMP Kinase, C-terminal domain"/>
    <property type="match status" value="1"/>
</dbReference>
<dbReference type="SUPFAM" id="SSF54211">
    <property type="entry name" value="Ribosomal protein S5 domain 2-like"/>
    <property type="match status" value="1"/>
</dbReference>
<sequence length="289" mass="31572">MSAMRWPAPAKLNLFLHVNGRRPDGYHELQTLFIFLNHGDWLEFEPLTDTDLLTLSPAIPGVPDEQNLIIRAARLLQARLPSQQGAHIRLEKVLPMGGGIGGGSSDAATTLVALNHLWQAGLSEDELAELGVQLGADVPVFVRGKAAFAEGVGERLQPVELPSAWYLVLKPDCHVATAAVFQDPDLPRDTPKMALHNLLEGEWKNDCELLVKKRHPEVANALGWLLEYAPSRMTGTGACVFAQFEDEVAAREVLAKVPKGWDGFVAKGENISPLFAALQQVSDWGIAKR</sequence>
<evidence type="ECO:0000255" key="1">
    <source>
        <dbReference type="HAMAP-Rule" id="MF_00061"/>
    </source>
</evidence>
<gene>
    <name evidence="1" type="primary">ispE</name>
    <name type="ordered locus">AHA_3152</name>
</gene>
<comment type="function">
    <text evidence="1">Catalyzes the phosphorylation of the position 2 hydroxy group of 4-diphosphocytidyl-2C-methyl-D-erythritol.</text>
</comment>
<comment type="catalytic activity">
    <reaction evidence="1">
        <text>4-CDP-2-C-methyl-D-erythritol + ATP = 4-CDP-2-C-methyl-D-erythritol 2-phosphate + ADP + H(+)</text>
        <dbReference type="Rhea" id="RHEA:18437"/>
        <dbReference type="ChEBI" id="CHEBI:15378"/>
        <dbReference type="ChEBI" id="CHEBI:30616"/>
        <dbReference type="ChEBI" id="CHEBI:57823"/>
        <dbReference type="ChEBI" id="CHEBI:57919"/>
        <dbReference type="ChEBI" id="CHEBI:456216"/>
        <dbReference type="EC" id="2.7.1.148"/>
    </reaction>
</comment>
<comment type="pathway">
    <text evidence="1">Isoprenoid biosynthesis; isopentenyl diphosphate biosynthesis via DXP pathway; isopentenyl diphosphate from 1-deoxy-D-xylulose 5-phosphate: step 3/6.</text>
</comment>
<comment type="similarity">
    <text evidence="1">Belongs to the GHMP kinase family. IspE subfamily.</text>
</comment>
<proteinExistence type="inferred from homology"/>
<feature type="chain" id="PRO_0000335696" description="4-diphosphocytidyl-2-C-methyl-D-erythritol kinase">
    <location>
        <begin position="1"/>
        <end position="289"/>
    </location>
</feature>
<feature type="active site" evidence="1">
    <location>
        <position position="11"/>
    </location>
</feature>
<feature type="active site" evidence="1">
    <location>
        <position position="137"/>
    </location>
</feature>
<feature type="binding site" evidence="1">
    <location>
        <begin position="95"/>
        <end position="105"/>
    </location>
    <ligand>
        <name>ATP</name>
        <dbReference type="ChEBI" id="CHEBI:30616"/>
    </ligand>
</feature>
<organism>
    <name type="scientific">Aeromonas hydrophila subsp. hydrophila (strain ATCC 7966 / DSM 30187 / BCRC 13018 / CCUG 14551 / JCM 1027 / KCTC 2358 / NCIMB 9240 / NCTC 8049)</name>
    <dbReference type="NCBI Taxonomy" id="380703"/>
    <lineage>
        <taxon>Bacteria</taxon>
        <taxon>Pseudomonadati</taxon>
        <taxon>Pseudomonadota</taxon>
        <taxon>Gammaproteobacteria</taxon>
        <taxon>Aeromonadales</taxon>
        <taxon>Aeromonadaceae</taxon>
        <taxon>Aeromonas</taxon>
    </lineage>
</organism>
<protein>
    <recommendedName>
        <fullName evidence="1">4-diphosphocytidyl-2-C-methyl-D-erythritol kinase</fullName>
        <shortName evidence="1">CMK</shortName>
        <ecNumber evidence="1">2.7.1.148</ecNumber>
    </recommendedName>
    <alternativeName>
        <fullName evidence="1">4-(cytidine-5'-diphospho)-2-C-methyl-D-erythritol kinase</fullName>
    </alternativeName>
</protein>
<reference key="1">
    <citation type="journal article" date="2006" name="J. Bacteriol.">
        <title>Genome sequence of Aeromonas hydrophila ATCC 7966T: jack of all trades.</title>
        <authorList>
            <person name="Seshadri R."/>
            <person name="Joseph S.W."/>
            <person name="Chopra A.K."/>
            <person name="Sha J."/>
            <person name="Shaw J."/>
            <person name="Graf J."/>
            <person name="Haft D.H."/>
            <person name="Wu M."/>
            <person name="Ren Q."/>
            <person name="Rosovitz M.J."/>
            <person name="Madupu R."/>
            <person name="Tallon L."/>
            <person name="Kim M."/>
            <person name="Jin S."/>
            <person name="Vuong H."/>
            <person name="Stine O.C."/>
            <person name="Ali A."/>
            <person name="Horneman A.J."/>
            <person name="Heidelberg J.F."/>
        </authorList>
    </citation>
    <scope>NUCLEOTIDE SEQUENCE [LARGE SCALE GENOMIC DNA]</scope>
    <source>
        <strain>ATCC 7966 / DSM 30187 / BCRC 13018 / CCUG 14551 / JCM 1027 / KCTC 2358 / NCIMB 9240 / NCTC 8049</strain>
    </source>
</reference>
<name>ISPE_AERHH</name>
<accession>A0KN01</accession>
<keyword id="KW-0067">ATP-binding</keyword>
<keyword id="KW-0414">Isoprene biosynthesis</keyword>
<keyword id="KW-0418">Kinase</keyword>
<keyword id="KW-0547">Nucleotide-binding</keyword>
<keyword id="KW-1185">Reference proteome</keyword>
<keyword id="KW-0808">Transferase</keyword>